<dbReference type="EMBL" id="M32454">
    <property type="protein sequence ID" value="AAA49644.1"/>
    <property type="molecule type" value="mRNA"/>
</dbReference>
<dbReference type="EMBL" id="X14260">
    <property type="protein sequence ID" value="CAA32473.1"/>
    <property type="molecule type" value="Genomic_DNA"/>
</dbReference>
<dbReference type="EMBL" id="DQ224419">
    <property type="protein sequence ID" value="ABB04106.1"/>
    <property type="molecule type" value="Genomic_DNA"/>
</dbReference>
<dbReference type="EMBL" id="BC088005">
    <property type="protein sequence ID" value="AAH88005.1"/>
    <property type="molecule type" value="mRNA"/>
</dbReference>
<dbReference type="PIR" id="S02732">
    <property type="entry name" value="HAXLWA"/>
</dbReference>
<dbReference type="RefSeq" id="NP_988860.1">
    <property type="nucleotide sequence ID" value="NM_203529.1"/>
</dbReference>
<dbReference type="SMR" id="P07428"/>
<dbReference type="STRING" id="8364.ENSXETP00000003811"/>
<dbReference type="PaxDb" id="8364-ENSXETP00000002494"/>
<dbReference type="DNASU" id="394454"/>
<dbReference type="GeneID" id="394454"/>
<dbReference type="KEGG" id="xtr:394454"/>
<dbReference type="AGR" id="Xenbase:XB-GENE-478141"/>
<dbReference type="CTD" id="3039"/>
<dbReference type="Xenbase" id="XB-GENE-478141">
    <property type="gene designation" value="hba1"/>
</dbReference>
<dbReference type="eggNOG" id="KOG3378">
    <property type="taxonomic scope" value="Eukaryota"/>
</dbReference>
<dbReference type="HOGENOM" id="CLU_003827_10_2_1"/>
<dbReference type="InParanoid" id="P07428"/>
<dbReference type="OMA" id="HEHAQNS"/>
<dbReference type="OrthoDB" id="8751793at2759"/>
<dbReference type="PhylomeDB" id="P07428"/>
<dbReference type="Reactome" id="R-XTR-1237044">
    <property type="pathway name" value="Erythrocytes take up carbon dioxide and release oxygen"/>
</dbReference>
<dbReference type="Reactome" id="R-XTR-1247673">
    <property type="pathway name" value="Erythrocytes take up oxygen and release carbon dioxide"/>
</dbReference>
<dbReference type="Reactome" id="R-XTR-2168880">
    <property type="pathway name" value="Scavenging of heme from plasma"/>
</dbReference>
<dbReference type="Reactome" id="R-XTR-9707564">
    <property type="pathway name" value="Cytoprotection by HMOX1"/>
</dbReference>
<dbReference type="Reactome" id="R-XTR-9707616">
    <property type="pathway name" value="Heme signaling"/>
</dbReference>
<dbReference type="Proteomes" id="UP000008143">
    <property type="component" value="Chromosome 9"/>
</dbReference>
<dbReference type="Bgee" id="ENSXETG00000025664">
    <property type="expression patterns" value="Expressed in liver and 17 other cell types or tissues"/>
</dbReference>
<dbReference type="GO" id="GO:0005833">
    <property type="term" value="C:hemoglobin complex"/>
    <property type="evidence" value="ECO:0007669"/>
    <property type="project" value="InterPro"/>
</dbReference>
<dbReference type="GO" id="GO:0020037">
    <property type="term" value="F:heme binding"/>
    <property type="evidence" value="ECO:0007669"/>
    <property type="project" value="InterPro"/>
</dbReference>
<dbReference type="GO" id="GO:0046872">
    <property type="term" value="F:metal ion binding"/>
    <property type="evidence" value="ECO:0007669"/>
    <property type="project" value="UniProtKB-KW"/>
</dbReference>
<dbReference type="GO" id="GO:0019825">
    <property type="term" value="F:oxygen binding"/>
    <property type="evidence" value="ECO:0007669"/>
    <property type="project" value="InterPro"/>
</dbReference>
<dbReference type="GO" id="GO:0005344">
    <property type="term" value="F:oxygen carrier activity"/>
    <property type="evidence" value="ECO:0007669"/>
    <property type="project" value="UniProtKB-KW"/>
</dbReference>
<dbReference type="CDD" id="cd08927">
    <property type="entry name" value="Hb-alpha-like"/>
    <property type="match status" value="1"/>
</dbReference>
<dbReference type="FunFam" id="1.10.490.10:FF:000002">
    <property type="entry name" value="Hemoglobin subunit alpha"/>
    <property type="match status" value="1"/>
</dbReference>
<dbReference type="Gene3D" id="1.10.490.10">
    <property type="entry name" value="Globins"/>
    <property type="match status" value="1"/>
</dbReference>
<dbReference type="InterPro" id="IPR000971">
    <property type="entry name" value="Globin"/>
</dbReference>
<dbReference type="InterPro" id="IPR009050">
    <property type="entry name" value="Globin-like_sf"/>
</dbReference>
<dbReference type="InterPro" id="IPR012292">
    <property type="entry name" value="Globin/Proto"/>
</dbReference>
<dbReference type="InterPro" id="IPR002338">
    <property type="entry name" value="Hemoglobin_a-typ"/>
</dbReference>
<dbReference type="InterPro" id="IPR050056">
    <property type="entry name" value="Hemoglobin_oxygen_transport"/>
</dbReference>
<dbReference type="PANTHER" id="PTHR11442">
    <property type="entry name" value="HEMOGLOBIN FAMILY MEMBER"/>
    <property type="match status" value="1"/>
</dbReference>
<dbReference type="PANTHER" id="PTHR11442:SF48">
    <property type="entry name" value="HEMOGLOBIN SUBUNIT ALPHA"/>
    <property type="match status" value="1"/>
</dbReference>
<dbReference type="Pfam" id="PF00042">
    <property type="entry name" value="Globin"/>
    <property type="match status" value="1"/>
</dbReference>
<dbReference type="PRINTS" id="PR00612">
    <property type="entry name" value="ALPHAHAEM"/>
</dbReference>
<dbReference type="SUPFAM" id="SSF46458">
    <property type="entry name" value="Globin-like"/>
    <property type="match status" value="1"/>
</dbReference>
<dbReference type="PROSITE" id="PS01033">
    <property type="entry name" value="GLOBIN"/>
    <property type="match status" value="1"/>
</dbReference>
<gene>
    <name type="primary">hba-A</name>
    <name type="synonym">hba</name>
</gene>
<name>HBA_XENTR</name>
<protein>
    <recommendedName>
        <fullName>Hemoglobin subunit alpha</fullName>
    </recommendedName>
    <alternativeName>
        <fullName>Alpha-globin</fullName>
    </alternativeName>
    <alternativeName>
        <fullName>Hemoglobin alpha chain</fullName>
    </alternativeName>
</protein>
<accession>P07428</accession>
<accession>Q5I0T1</accession>
<sequence>MHLTADDKKHIKAIWPSVAAHGDKYGGEALHRMFMCAPKTKTYFPDFDFSEHSKHILAHGKKVSDALNEACNHLDNIAGCLSKLSDLHAYDLRVDPGNFPLLAHQILVVVAIHFPKQFDPATHKALDKFLVSVSNVLTSKYR</sequence>
<reference key="1">
    <citation type="journal article" date="1986" name="J. Mol. Evol.">
        <title>Globin evolution in the genus Xenopus: comparative analysis of cDNAs coding for adult globin polypeptides of Xenopus borealis and Xenopus tropicalis.</title>
        <authorList>
            <person name="Knoechel W."/>
            <person name="Korge E."/>
            <person name="Basner A."/>
            <person name="Meyerhof W."/>
        </authorList>
    </citation>
    <scope>NUCLEOTIDE SEQUENCE [MRNA]</scope>
</reference>
<reference key="2">
    <citation type="journal article" date="1988" name="J. Mol. Evol.">
        <title>Primary structure and evolutionary relationship between the adult alpha-globin genes and their 5'-flanking regions of Xenopus laevis and Xenopus tropicalis.</title>
        <authorList>
            <person name="Stalder J."/>
            <person name="Wirthmueller U."/>
            <person name="Beck J."/>
            <person name="Gruber A."/>
            <person name="Meyerhof W."/>
            <person name="Knoechel W."/>
            <person name="Weber R."/>
        </authorList>
    </citation>
    <scope>NUCLEOTIDE SEQUENCE [GENOMIC DNA]</scope>
</reference>
<reference key="3">
    <citation type="submission" date="2005-09" db="EMBL/GenBank/DDBJ databases">
        <title>Characterization of alpha globin genes in Xenopus tropicalis.</title>
        <authorList>
            <person name="Roche D.D."/>
            <person name="Cheng J.F."/>
            <person name="Harland R.M."/>
        </authorList>
    </citation>
    <scope>NUCLEOTIDE SEQUENCE [GENOMIC DNA]</scope>
</reference>
<reference key="4">
    <citation type="submission" date="2004-12" db="EMBL/GenBank/DDBJ databases">
        <authorList>
            <consortium name="NIH - Xenopus Gene Collection (XGC) project"/>
        </authorList>
    </citation>
    <scope>NUCLEOTIDE SEQUENCE [LARGE SCALE MRNA]</scope>
</reference>
<keyword id="KW-0349">Heme</keyword>
<keyword id="KW-0408">Iron</keyword>
<keyword id="KW-0479">Metal-binding</keyword>
<keyword id="KW-0561">Oxygen transport</keyword>
<keyword id="KW-1185">Reference proteome</keyword>
<keyword id="KW-0813">Transport</keyword>
<feature type="initiator methionine" description="Removed">
    <location>
        <position position="1"/>
    </location>
</feature>
<feature type="chain" id="PRO_0000052812" description="Hemoglobin subunit alpha">
    <location>
        <begin position="2"/>
        <end position="142"/>
    </location>
</feature>
<feature type="domain" description="Globin" evidence="1">
    <location>
        <begin position="2"/>
        <end position="142"/>
    </location>
</feature>
<feature type="binding site" description="distal binding residue">
    <location>
        <position position="59"/>
    </location>
    <ligand>
        <name>heme b</name>
        <dbReference type="ChEBI" id="CHEBI:60344"/>
    </ligand>
    <ligandPart>
        <name>Fe</name>
        <dbReference type="ChEBI" id="CHEBI:18248"/>
    </ligandPart>
</feature>
<feature type="binding site" description="proximal binding residue">
    <location>
        <position position="88"/>
    </location>
    <ligand>
        <name>heme b</name>
        <dbReference type="ChEBI" id="CHEBI:60344"/>
    </ligand>
    <ligandPart>
        <name>Fe</name>
        <dbReference type="ChEBI" id="CHEBI:18248"/>
    </ligandPart>
</feature>
<proteinExistence type="evidence at transcript level"/>
<organism>
    <name type="scientific">Xenopus tropicalis</name>
    <name type="common">Western clawed frog</name>
    <name type="synonym">Silurana tropicalis</name>
    <dbReference type="NCBI Taxonomy" id="8364"/>
    <lineage>
        <taxon>Eukaryota</taxon>
        <taxon>Metazoa</taxon>
        <taxon>Chordata</taxon>
        <taxon>Craniata</taxon>
        <taxon>Vertebrata</taxon>
        <taxon>Euteleostomi</taxon>
        <taxon>Amphibia</taxon>
        <taxon>Batrachia</taxon>
        <taxon>Anura</taxon>
        <taxon>Pipoidea</taxon>
        <taxon>Pipidae</taxon>
        <taxon>Xenopodinae</taxon>
        <taxon>Xenopus</taxon>
        <taxon>Silurana</taxon>
    </lineage>
</organism>
<comment type="function">
    <text>Involved in oxygen transport from the lung to the various peripheral tissues.</text>
</comment>
<comment type="subunit">
    <text>Heterotetramer of two alpha chains and two beta chains.</text>
</comment>
<comment type="tissue specificity">
    <text>Red blood cells.</text>
</comment>
<comment type="similarity">
    <text evidence="1">Belongs to the globin family.</text>
</comment>
<evidence type="ECO:0000255" key="1">
    <source>
        <dbReference type="PROSITE-ProRule" id="PRU00238"/>
    </source>
</evidence>